<name>PSB2_BOVIN</name>
<evidence type="ECO:0000250" key="1">
    <source>
        <dbReference type="UniProtKB" id="P49721"/>
    </source>
</evidence>
<evidence type="ECO:0000255" key="2">
    <source>
        <dbReference type="PROSITE-ProRule" id="PRU00809"/>
    </source>
</evidence>
<evidence type="ECO:0000269" key="3">
    <source>
    </source>
</evidence>
<evidence type="ECO:0007829" key="4">
    <source>
        <dbReference type="PDB" id="8FZ5"/>
    </source>
</evidence>
<accession>Q5E9K0</accession>
<proteinExistence type="evidence at protein level"/>
<comment type="function">
    <text evidence="1">Non-catalytic component of the 20S core proteasome complex involved in the proteolytic degradation of most intracellular proteins. This complex plays numerous essential roles within the cell by associating with different regulatory particles. Associated with two 19S regulatory particles, forms the 26S proteasome and thus participates in the ATP-dependent degradation of ubiquitinated proteins. The 26S proteasome plays a key role in the maintenance of protein homeostasis by removing misfolded or damaged proteins that could impair cellular functions, and by removing proteins whose functions are no longer required. Associated with the PA200 or PA28, the 20S proteasome mediates ubiquitin-independent protein degradation. This type of proteolysis is required in several pathways including spermatogenesis (20S-PA200 complex) or generation of a subset of MHC class I-presented antigenic peptides (20S-PA28 complex).</text>
</comment>
<comment type="subunit">
    <text evidence="3">The 26S proteasome consists of a 20S proteasome core and two 19S regulatory subunits. The 20S proteasome core is a barrel-shaped complex made of 28 subunits that are arranged in four stacked rings. The two outer rings are each formed by seven alpha subunits, and the two inner rings are formed by seven beta subunits. The proteolytic activity is exerted by three beta-subunits PSMB5, PSMB6 and PSMB7.</text>
</comment>
<comment type="subcellular location">
    <subcellularLocation>
        <location evidence="1">Cytoplasm</location>
    </subcellularLocation>
    <subcellularLocation>
        <location evidence="1">Nucleus</location>
    </subcellularLocation>
    <text evidence="1">Translocated from the cytoplasm into the nucleus following interaction with AKIRIN2, which bridges the proteasome with the nuclear import receptor IPO9.</text>
</comment>
<comment type="similarity">
    <text evidence="2">Belongs to the peptidase T1B family.</text>
</comment>
<protein>
    <recommendedName>
        <fullName>Proteasome subunit beta type-2</fullName>
    </recommendedName>
</protein>
<keyword id="KW-0002">3D-structure</keyword>
<keyword id="KW-0007">Acetylation</keyword>
<keyword id="KW-0963">Cytoplasm</keyword>
<keyword id="KW-0539">Nucleus</keyword>
<keyword id="KW-0647">Proteasome</keyword>
<keyword id="KW-1185">Reference proteome</keyword>
<gene>
    <name type="primary">PSMB2</name>
</gene>
<reference key="1">
    <citation type="journal article" date="2005" name="BMC Genomics">
        <title>Characterization of 954 bovine full-CDS cDNA sequences.</title>
        <authorList>
            <person name="Harhay G.P."/>
            <person name="Sonstegard T.S."/>
            <person name="Keele J.W."/>
            <person name="Heaton M.P."/>
            <person name="Clawson M.L."/>
            <person name="Snelling W.M."/>
            <person name="Wiedmann R.T."/>
            <person name="Van Tassell C.P."/>
            <person name="Smith T.P.L."/>
        </authorList>
    </citation>
    <scope>NUCLEOTIDE SEQUENCE [LARGE SCALE MRNA]</scope>
</reference>
<reference key="2">
    <citation type="submission" date="2005-08" db="EMBL/GenBank/DDBJ databases">
        <authorList>
            <consortium name="NIH - Mammalian Gene Collection (MGC) project"/>
        </authorList>
    </citation>
    <scope>NUCLEOTIDE SEQUENCE [LARGE SCALE MRNA]</scope>
    <source>
        <strain>Crossbred X Angus</strain>
        <tissue>Ileum</tissue>
    </source>
</reference>
<reference key="3">
    <citation type="journal article" date="2002" name="Structure">
        <title>The structure of the mammalian 20S proteasome at 2.75 A resolution.</title>
        <authorList>
            <person name="Unno M."/>
            <person name="Mizushima T."/>
            <person name="Morimoto Y."/>
            <person name="Tomisugi Y."/>
            <person name="Tanaka K."/>
            <person name="Yasuoka N."/>
            <person name="Tsukihara T."/>
        </authorList>
    </citation>
    <scope>X-RAY CRYSTALLOGRAPHY (2.75 ANGSTROMS) OF COMPLEX WITH 20S PROTEASOME</scope>
</reference>
<sequence length="201" mass="22896">MEYLIGIQGPDYVLVASDRVAASNIVQMKDDHDKMFKMSEKILLLCVGEAGDTVQFAEYIQKNVQLYKMRNGYELSPTAAANFTRRNLADYLRSRTPYHVNLLLAGYDEHEGPALYYMDYLAALAKAPFAAHGYGAFLTLSILDRYYTPTISREKAVELLRKCLEELQKRFILNLPTFSVRIIDRNGIHDLDNISFPKQGS</sequence>
<dbReference type="EMBL" id="BT020855">
    <property type="protein sequence ID" value="AAX08872.1"/>
    <property type="molecule type" value="mRNA"/>
</dbReference>
<dbReference type="EMBL" id="BT020920">
    <property type="protein sequence ID" value="AAX08937.1"/>
    <property type="molecule type" value="mRNA"/>
</dbReference>
<dbReference type="EMBL" id="BC102367">
    <property type="protein sequence ID" value="AAI02368.1"/>
    <property type="molecule type" value="mRNA"/>
</dbReference>
<dbReference type="RefSeq" id="NP_001015615.1">
    <property type="nucleotide sequence ID" value="NM_001015615.1"/>
</dbReference>
<dbReference type="PDB" id="1IRU">
    <property type="method" value="X-ray"/>
    <property type="resolution" value="2.75 A"/>
    <property type="chains" value="K/Y=1-201"/>
</dbReference>
<dbReference type="PDB" id="7DR6">
    <property type="method" value="EM"/>
    <property type="resolution" value="4.10 A"/>
    <property type="chains" value="I/T=1-201"/>
</dbReference>
<dbReference type="PDB" id="7DR7">
    <property type="method" value="EM"/>
    <property type="resolution" value="3.30 A"/>
    <property type="chains" value="I/T=1-201"/>
</dbReference>
<dbReference type="PDB" id="7DRW">
    <property type="method" value="EM"/>
    <property type="resolution" value="4.20 A"/>
    <property type="chains" value="T/l=1-201"/>
</dbReference>
<dbReference type="PDB" id="8AZK">
    <property type="method" value="EM"/>
    <property type="resolution" value="3.10 A"/>
    <property type="chains" value="K/Y=1-201"/>
</dbReference>
<dbReference type="PDB" id="8FZ5">
    <property type="method" value="EM"/>
    <property type="resolution" value="2.23 A"/>
    <property type="chains" value="K/Y=1-201"/>
</dbReference>
<dbReference type="PDB" id="8FZ6">
    <property type="method" value="EM"/>
    <property type="resolution" value="2.54 A"/>
    <property type="chains" value="K/Y=1-201"/>
</dbReference>
<dbReference type="PDBsum" id="1IRU"/>
<dbReference type="PDBsum" id="7DR6"/>
<dbReference type="PDBsum" id="7DR7"/>
<dbReference type="PDBsum" id="7DRW"/>
<dbReference type="PDBsum" id="8AZK"/>
<dbReference type="PDBsum" id="8FZ5"/>
<dbReference type="PDBsum" id="8FZ6"/>
<dbReference type="EMDB" id="EMD-15767"/>
<dbReference type="EMDB" id="EMD-29603"/>
<dbReference type="EMDB" id="EMD-29604"/>
<dbReference type="EMDB" id="EMD-30824"/>
<dbReference type="EMDB" id="EMD-30825"/>
<dbReference type="EMDB" id="EMD-30828"/>
<dbReference type="SMR" id="Q5E9K0"/>
<dbReference type="FunCoup" id="Q5E9K0">
    <property type="interactions" value="3374"/>
</dbReference>
<dbReference type="IntAct" id="Q5E9K0">
    <property type="interactions" value="1"/>
</dbReference>
<dbReference type="STRING" id="9913.ENSBTAP00000058051"/>
<dbReference type="MEROPS" id="T01.984"/>
<dbReference type="PaxDb" id="9913-ENSBTAP00000003072"/>
<dbReference type="PeptideAtlas" id="Q5E9K0"/>
<dbReference type="Ensembl" id="ENSBTAT00000070663.2">
    <property type="protein sequence ID" value="ENSBTAP00000058051.1"/>
    <property type="gene ID" value="ENSBTAG00000002377.7"/>
</dbReference>
<dbReference type="GeneID" id="516919"/>
<dbReference type="KEGG" id="bta:516919"/>
<dbReference type="CTD" id="5690"/>
<dbReference type="VEuPathDB" id="HostDB:ENSBTAG00000002377"/>
<dbReference type="VGNC" id="VGNC:33446">
    <property type="gene designation" value="PSMB2"/>
</dbReference>
<dbReference type="eggNOG" id="KOG0177">
    <property type="taxonomic scope" value="Eukaryota"/>
</dbReference>
<dbReference type="GeneTree" id="ENSGT00640000091536"/>
<dbReference type="HOGENOM" id="CLU_035750_12_1_1"/>
<dbReference type="InParanoid" id="Q5E9K0"/>
<dbReference type="OMA" id="MKRDHDK"/>
<dbReference type="OrthoDB" id="268428at2759"/>
<dbReference type="TreeFam" id="TF106219"/>
<dbReference type="Reactome" id="R-BTA-1169091">
    <property type="pathway name" value="Activation of NF-kappaB in B cells"/>
</dbReference>
<dbReference type="Reactome" id="R-BTA-1234176">
    <property type="pathway name" value="Oxygen-dependent proline hydroxylation of Hypoxia-inducible Factor Alpha"/>
</dbReference>
<dbReference type="Reactome" id="R-BTA-1236978">
    <property type="pathway name" value="Cross-presentation of soluble exogenous antigens (endosomes)"/>
</dbReference>
<dbReference type="Reactome" id="R-BTA-174084">
    <property type="pathway name" value="Autodegradation of Cdh1 by Cdh1:APC/C"/>
</dbReference>
<dbReference type="Reactome" id="R-BTA-174154">
    <property type="pathway name" value="APC/C:Cdc20 mediated degradation of Securin"/>
</dbReference>
<dbReference type="Reactome" id="R-BTA-174178">
    <property type="pathway name" value="APC/C:Cdh1 mediated degradation of Cdc20 and other APC/C:Cdh1 targeted proteins in late mitosis/early G1"/>
</dbReference>
<dbReference type="Reactome" id="R-BTA-174184">
    <property type="pathway name" value="Cdc20:Phospho-APC/C mediated degradation of Cyclin A"/>
</dbReference>
<dbReference type="Reactome" id="R-BTA-187577">
    <property type="pathway name" value="SCF(Skp2)-mediated degradation of p27/p21"/>
</dbReference>
<dbReference type="Reactome" id="R-BTA-195253">
    <property type="pathway name" value="Degradation of beta-catenin by the destruction complex"/>
</dbReference>
<dbReference type="Reactome" id="R-BTA-202424">
    <property type="pathway name" value="Downstream TCR signaling"/>
</dbReference>
<dbReference type="Reactome" id="R-BTA-2467813">
    <property type="pathway name" value="Separation of Sister Chromatids"/>
</dbReference>
<dbReference type="Reactome" id="R-BTA-2871837">
    <property type="pathway name" value="FCERI mediated NF-kB activation"/>
</dbReference>
<dbReference type="Reactome" id="R-BTA-349425">
    <property type="pathway name" value="Autodegradation of the E3 ubiquitin ligase COP1"/>
</dbReference>
<dbReference type="Reactome" id="R-BTA-350562">
    <property type="pathway name" value="Regulation of ornithine decarboxylase (ODC)"/>
</dbReference>
<dbReference type="Reactome" id="R-BTA-382556">
    <property type="pathway name" value="ABC-family proteins mediated transport"/>
</dbReference>
<dbReference type="Reactome" id="R-BTA-450408">
    <property type="pathway name" value="AUF1 (hnRNP D0) binds and destabilizes mRNA"/>
</dbReference>
<dbReference type="Reactome" id="R-BTA-4608870">
    <property type="pathway name" value="Asymmetric localization of PCP proteins"/>
</dbReference>
<dbReference type="Reactome" id="R-BTA-4641257">
    <property type="pathway name" value="Degradation of AXIN"/>
</dbReference>
<dbReference type="Reactome" id="R-BTA-4641258">
    <property type="pathway name" value="Degradation of DVL"/>
</dbReference>
<dbReference type="Reactome" id="R-BTA-5358346">
    <property type="pathway name" value="Hedgehog ligand biogenesis"/>
</dbReference>
<dbReference type="Reactome" id="R-BTA-5607761">
    <property type="pathway name" value="Dectin-1 mediated noncanonical NF-kB signaling"/>
</dbReference>
<dbReference type="Reactome" id="R-BTA-5607764">
    <property type="pathway name" value="CLEC7A (Dectin-1) signaling"/>
</dbReference>
<dbReference type="Reactome" id="R-BTA-5610780">
    <property type="pathway name" value="Degradation of GLI1 by the proteasome"/>
</dbReference>
<dbReference type="Reactome" id="R-BTA-5610785">
    <property type="pathway name" value="GLI3 is processed to GLI3R by the proteasome"/>
</dbReference>
<dbReference type="Reactome" id="R-BTA-5632684">
    <property type="pathway name" value="Hedgehog 'on' state"/>
</dbReference>
<dbReference type="Reactome" id="R-BTA-5668541">
    <property type="pathway name" value="TNFR2 non-canonical NF-kB pathway"/>
</dbReference>
<dbReference type="Reactome" id="R-BTA-5676590">
    <property type="pathway name" value="NIK--&gt;noncanonical NF-kB signaling"/>
</dbReference>
<dbReference type="Reactome" id="R-BTA-5687128">
    <property type="pathway name" value="MAPK6/MAPK4 signaling"/>
</dbReference>
<dbReference type="Reactome" id="R-BTA-5689603">
    <property type="pathway name" value="UCH proteinases"/>
</dbReference>
<dbReference type="Reactome" id="R-BTA-5689880">
    <property type="pathway name" value="Ub-specific processing proteases"/>
</dbReference>
<dbReference type="Reactome" id="R-BTA-68867">
    <property type="pathway name" value="Assembly of the pre-replicative complex"/>
</dbReference>
<dbReference type="Reactome" id="R-BTA-68949">
    <property type="pathway name" value="Orc1 removal from chromatin"/>
</dbReference>
<dbReference type="Reactome" id="R-BTA-69017">
    <property type="pathway name" value="CDK-mediated phosphorylation and removal of Cdc6"/>
</dbReference>
<dbReference type="Reactome" id="R-BTA-69481">
    <property type="pathway name" value="G2/M Checkpoints"/>
</dbReference>
<dbReference type="Reactome" id="R-BTA-69601">
    <property type="pathway name" value="Ubiquitin Mediated Degradation of Phosphorylated Cdc25A"/>
</dbReference>
<dbReference type="Reactome" id="R-BTA-75815">
    <property type="pathway name" value="Ubiquitin-dependent degradation of Cyclin D"/>
</dbReference>
<dbReference type="Reactome" id="R-BTA-8852276">
    <property type="pathway name" value="The role of GTSE1 in G2/M progression after G2 checkpoint"/>
</dbReference>
<dbReference type="Reactome" id="R-BTA-8854050">
    <property type="pathway name" value="FBXL7 down-regulates AURKA during mitotic entry and in early mitosis"/>
</dbReference>
<dbReference type="Reactome" id="R-BTA-8939236">
    <property type="pathway name" value="RUNX1 regulates transcription of genes involved in differentiation of HSCs"/>
</dbReference>
<dbReference type="Reactome" id="R-BTA-8939902">
    <property type="pathway name" value="Regulation of RUNX2 expression and activity"/>
</dbReference>
<dbReference type="Reactome" id="R-BTA-8941858">
    <property type="pathway name" value="Regulation of RUNX3 expression and activity"/>
</dbReference>
<dbReference type="Reactome" id="R-BTA-8948751">
    <property type="pathway name" value="Regulation of PTEN stability and activity"/>
</dbReference>
<dbReference type="Reactome" id="R-BTA-8951664">
    <property type="pathway name" value="Neddylation"/>
</dbReference>
<dbReference type="Reactome" id="R-BTA-9020702">
    <property type="pathway name" value="Interleukin-1 signaling"/>
</dbReference>
<dbReference type="Reactome" id="R-BTA-9755511">
    <property type="pathway name" value="KEAP1-NFE2L2 pathway"/>
</dbReference>
<dbReference type="Reactome" id="R-BTA-9762114">
    <property type="pathway name" value="GSK3B and BTRC:CUL1-mediated-degradation of NFE2L2"/>
</dbReference>
<dbReference type="Reactome" id="R-BTA-983168">
    <property type="pathway name" value="Antigen processing: Ubiquitination &amp; Proteasome degradation"/>
</dbReference>
<dbReference type="Reactome" id="R-BTA-9907900">
    <property type="pathway name" value="Proteasome assembly"/>
</dbReference>
<dbReference type="EvolutionaryTrace" id="Q5E9K0"/>
<dbReference type="Proteomes" id="UP000009136">
    <property type="component" value="Chromosome 3"/>
</dbReference>
<dbReference type="Bgee" id="ENSBTAG00000002377">
    <property type="expression patterns" value="Expressed in granulosa cell and 105 other cell types or tissues"/>
</dbReference>
<dbReference type="GO" id="GO:0005829">
    <property type="term" value="C:cytosol"/>
    <property type="evidence" value="ECO:0000318"/>
    <property type="project" value="GO_Central"/>
</dbReference>
<dbReference type="GO" id="GO:0005654">
    <property type="term" value="C:nucleoplasm"/>
    <property type="evidence" value="ECO:0007669"/>
    <property type="project" value="Ensembl"/>
</dbReference>
<dbReference type="GO" id="GO:0005634">
    <property type="term" value="C:nucleus"/>
    <property type="evidence" value="ECO:0000318"/>
    <property type="project" value="GO_Central"/>
</dbReference>
<dbReference type="GO" id="GO:0005839">
    <property type="term" value="C:proteasome core complex"/>
    <property type="evidence" value="ECO:0000250"/>
    <property type="project" value="UniProtKB"/>
</dbReference>
<dbReference type="GO" id="GO:0019774">
    <property type="term" value="C:proteasome core complex, beta-subunit complex"/>
    <property type="evidence" value="ECO:0000250"/>
    <property type="project" value="UniProtKB"/>
</dbReference>
<dbReference type="GO" id="GO:0043161">
    <property type="term" value="P:proteasome-mediated ubiquitin-dependent protein catabolic process"/>
    <property type="evidence" value="ECO:0000318"/>
    <property type="project" value="GO_Central"/>
</dbReference>
<dbReference type="CDD" id="cd03758">
    <property type="entry name" value="proteasome_beta_type_2"/>
    <property type="match status" value="1"/>
</dbReference>
<dbReference type="FunFam" id="3.60.20.10:FF:000008">
    <property type="entry name" value="Proteasome subunit beta type-4"/>
    <property type="match status" value="1"/>
</dbReference>
<dbReference type="Gene3D" id="3.60.20.10">
    <property type="entry name" value="Glutamine Phosphoribosylpyrophosphate, subunit 1, domain 1"/>
    <property type="match status" value="1"/>
</dbReference>
<dbReference type="InterPro" id="IPR029055">
    <property type="entry name" value="Ntn_hydrolases_N"/>
</dbReference>
<dbReference type="InterPro" id="IPR035206">
    <property type="entry name" value="Proteasome_beta2"/>
</dbReference>
<dbReference type="InterPro" id="IPR016050">
    <property type="entry name" value="Proteasome_bsu_CS"/>
</dbReference>
<dbReference type="InterPro" id="IPR001353">
    <property type="entry name" value="Proteasome_sua/b"/>
</dbReference>
<dbReference type="InterPro" id="IPR023333">
    <property type="entry name" value="Proteasome_suB-type"/>
</dbReference>
<dbReference type="PANTHER" id="PTHR32194">
    <property type="entry name" value="METALLOPROTEASE TLDD"/>
    <property type="match status" value="1"/>
</dbReference>
<dbReference type="PANTHER" id="PTHR32194:SF2">
    <property type="entry name" value="PROTEASOME SUBUNIT BETA TYPE-1"/>
    <property type="match status" value="1"/>
</dbReference>
<dbReference type="Pfam" id="PF00227">
    <property type="entry name" value="Proteasome"/>
    <property type="match status" value="1"/>
</dbReference>
<dbReference type="SUPFAM" id="SSF56235">
    <property type="entry name" value="N-terminal nucleophile aminohydrolases (Ntn hydrolases)"/>
    <property type="match status" value="1"/>
</dbReference>
<dbReference type="PROSITE" id="PS00854">
    <property type="entry name" value="PROTEASOME_BETA_1"/>
    <property type="match status" value="1"/>
</dbReference>
<dbReference type="PROSITE" id="PS51476">
    <property type="entry name" value="PROTEASOME_BETA_2"/>
    <property type="match status" value="1"/>
</dbReference>
<feature type="chain" id="PRO_0000239852" description="Proteasome subunit beta type-2">
    <location>
        <begin position="1"/>
        <end position="201"/>
    </location>
</feature>
<feature type="modified residue" description="N-acetylmethionine" evidence="1">
    <location>
        <position position="1"/>
    </location>
</feature>
<feature type="strand" evidence="4">
    <location>
        <begin position="4"/>
        <end position="8"/>
    </location>
</feature>
<feature type="strand" evidence="4">
    <location>
        <begin position="13"/>
        <end position="18"/>
    </location>
</feature>
<feature type="strand" evidence="4">
    <location>
        <begin position="21"/>
        <end position="23"/>
    </location>
</feature>
<feature type="strand" evidence="4">
    <location>
        <begin position="26"/>
        <end position="31"/>
    </location>
</feature>
<feature type="strand" evidence="4">
    <location>
        <begin position="35"/>
        <end position="39"/>
    </location>
</feature>
<feature type="strand" evidence="4">
    <location>
        <begin position="42"/>
        <end position="49"/>
    </location>
</feature>
<feature type="helix" evidence="4">
    <location>
        <begin position="52"/>
        <end position="71"/>
    </location>
</feature>
<feature type="helix" evidence="4">
    <location>
        <begin position="77"/>
        <end position="92"/>
    </location>
</feature>
<feature type="strand" evidence="4">
    <location>
        <begin position="94"/>
        <end position="96"/>
    </location>
</feature>
<feature type="strand" evidence="4">
    <location>
        <begin position="100"/>
        <end position="108"/>
    </location>
</feature>
<feature type="turn" evidence="4">
    <location>
        <begin position="109"/>
        <end position="111"/>
    </location>
</feature>
<feature type="strand" evidence="4">
    <location>
        <begin position="112"/>
        <end position="118"/>
    </location>
</feature>
<feature type="strand" evidence="4">
    <location>
        <begin position="124"/>
        <end position="126"/>
    </location>
</feature>
<feature type="strand" evidence="4">
    <location>
        <begin position="128"/>
        <end position="133"/>
    </location>
</feature>
<feature type="helix" evidence="4">
    <location>
        <begin position="136"/>
        <end position="146"/>
    </location>
</feature>
<feature type="helix" evidence="4">
    <location>
        <begin position="153"/>
        <end position="170"/>
    </location>
</feature>
<feature type="strand" evidence="4">
    <location>
        <begin position="171"/>
        <end position="173"/>
    </location>
</feature>
<feature type="strand" evidence="4">
    <location>
        <begin position="177"/>
        <end position="184"/>
    </location>
</feature>
<feature type="strand" evidence="4">
    <location>
        <begin position="187"/>
        <end position="190"/>
    </location>
</feature>
<organism>
    <name type="scientific">Bos taurus</name>
    <name type="common">Bovine</name>
    <dbReference type="NCBI Taxonomy" id="9913"/>
    <lineage>
        <taxon>Eukaryota</taxon>
        <taxon>Metazoa</taxon>
        <taxon>Chordata</taxon>
        <taxon>Craniata</taxon>
        <taxon>Vertebrata</taxon>
        <taxon>Euteleostomi</taxon>
        <taxon>Mammalia</taxon>
        <taxon>Eutheria</taxon>
        <taxon>Laurasiatheria</taxon>
        <taxon>Artiodactyla</taxon>
        <taxon>Ruminantia</taxon>
        <taxon>Pecora</taxon>
        <taxon>Bovidae</taxon>
        <taxon>Bovinae</taxon>
        <taxon>Bos</taxon>
    </lineage>
</organism>